<name>NUOI_METSB</name>
<organism>
    <name type="scientific">Methylocella silvestris (strain DSM 15510 / CIP 108128 / LMG 27833 / NCIMB 13906 / BL2)</name>
    <dbReference type="NCBI Taxonomy" id="395965"/>
    <lineage>
        <taxon>Bacteria</taxon>
        <taxon>Pseudomonadati</taxon>
        <taxon>Pseudomonadota</taxon>
        <taxon>Alphaproteobacteria</taxon>
        <taxon>Hyphomicrobiales</taxon>
        <taxon>Beijerinckiaceae</taxon>
        <taxon>Methylocella</taxon>
    </lineage>
</organism>
<keyword id="KW-0004">4Fe-4S</keyword>
<keyword id="KW-0997">Cell inner membrane</keyword>
<keyword id="KW-1003">Cell membrane</keyword>
<keyword id="KW-0408">Iron</keyword>
<keyword id="KW-0411">Iron-sulfur</keyword>
<keyword id="KW-0472">Membrane</keyword>
<keyword id="KW-0479">Metal-binding</keyword>
<keyword id="KW-0520">NAD</keyword>
<keyword id="KW-0874">Quinone</keyword>
<keyword id="KW-1185">Reference proteome</keyword>
<keyword id="KW-0677">Repeat</keyword>
<keyword id="KW-1278">Translocase</keyword>
<keyword id="KW-0830">Ubiquinone</keyword>
<evidence type="ECO:0000255" key="1">
    <source>
        <dbReference type="HAMAP-Rule" id="MF_01351"/>
    </source>
</evidence>
<sequence length="162" mass="18734">MKLDQAAKALFLSEFVGAFLLSMRYFFKPKPTLNYPHEKNPQSPRYRGEHALRRYPNGEERCIACKLCEAICPAQAITIEAGPRRNDGTRRTTRYDIDMVKCIYCGFCQEACPVDAIVEGPNAEFSVETREELYYDKDRLLENGARWEREIARNIALDAPYR</sequence>
<reference key="1">
    <citation type="journal article" date="2010" name="J. Bacteriol.">
        <title>Complete genome sequence of the aerobic facultative methanotroph Methylocella silvestris BL2.</title>
        <authorList>
            <person name="Chen Y."/>
            <person name="Crombie A."/>
            <person name="Rahman M.T."/>
            <person name="Dedysh S.N."/>
            <person name="Liesack W."/>
            <person name="Stott M.B."/>
            <person name="Alam M."/>
            <person name="Theisen A.R."/>
            <person name="Murrell J.C."/>
            <person name="Dunfield P.F."/>
        </authorList>
    </citation>
    <scope>NUCLEOTIDE SEQUENCE [LARGE SCALE GENOMIC DNA]</scope>
    <source>
        <strain>DSM 15510 / CIP 108128 / LMG 27833 / NCIMB 13906 / BL2</strain>
    </source>
</reference>
<gene>
    <name evidence="1" type="primary">nuoI</name>
    <name type="ordered locus">Msil_2926</name>
</gene>
<comment type="function">
    <text evidence="1">NDH-1 shuttles electrons from NADH, via FMN and iron-sulfur (Fe-S) centers, to quinones in the respiratory chain. The immediate electron acceptor for the enzyme in this species is believed to be ubiquinone. Couples the redox reaction to proton translocation (for every two electrons transferred, four hydrogen ions are translocated across the cytoplasmic membrane), and thus conserves the redox energy in a proton gradient.</text>
</comment>
<comment type="catalytic activity">
    <reaction evidence="1">
        <text>a quinone + NADH + 5 H(+)(in) = a quinol + NAD(+) + 4 H(+)(out)</text>
        <dbReference type="Rhea" id="RHEA:57888"/>
        <dbReference type="ChEBI" id="CHEBI:15378"/>
        <dbReference type="ChEBI" id="CHEBI:24646"/>
        <dbReference type="ChEBI" id="CHEBI:57540"/>
        <dbReference type="ChEBI" id="CHEBI:57945"/>
        <dbReference type="ChEBI" id="CHEBI:132124"/>
    </reaction>
</comment>
<comment type="cofactor">
    <cofactor evidence="1">
        <name>[4Fe-4S] cluster</name>
        <dbReference type="ChEBI" id="CHEBI:49883"/>
    </cofactor>
    <text evidence="1">Binds 2 [4Fe-4S] clusters per subunit.</text>
</comment>
<comment type="subunit">
    <text evidence="1">NDH-1 is composed of 14 different subunits. Subunits NuoA, H, J, K, L, M, N constitute the membrane sector of the complex.</text>
</comment>
<comment type="subcellular location">
    <subcellularLocation>
        <location evidence="1">Cell inner membrane</location>
        <topology evidence="1">Peripheral membrane protein</topology>
    </subcellularLocation>
</comment>
<comment type="similarity">
    <text evidence="1">Belongs to the complex I 23 kDa subunit family.</text>
</comment>
<protein>
    <recommendedName>
        <fullName evidence="1">NADH-quinone oxidoreductase subunit I</fullName>
        <ecNumber evidence="1">7.1.1.-</ecNumber>
    </recommendedName>
    <alternativeName>
        <fullName evidence="1">NADH dehydrogenase I subunit I</fullName>
    </alternativeName>
    <alternativeName>
        <fullName evidence="1">NDH-1 subunit I</fullName>
    </alternativeName>
</protein>
<feature type="chain" id="PRO_1000214849" description="NADH-quinone oxidoreductase subunit I">
    <location>
        <begin position="1"/>
        <end position="162"/>
    </location>
</feature>
<feature type="domain" description="4Fe-4S ferredoxin-type 1" evidence="1">
    <location>
        <begin position="52"/>
        <end position="82"/>
    </location>
</feature>
<feature type="domain" description="4Fe-4S ferredoxin-type 2" evidence="1">
    <location>
        <begin position="93"/>
        <end position="122"/>
    </location>
</feature>
<feature type="binding site" evidence="1">
    <location>
        <position position="62"/>
    </location>
    <ligand>
        <name>[4Fe-4S] cluster</name>
        <dbReference type="ChEBI" id="CHEBI:49883"/>
        <label>1</label>
    </ligand>
</feature>
<feature type="binding site" evidence="1">
    <location>
        <position position="65"/>
    </location>
    <ligand>
        <name>[4Fe-4S] cluster</name>
        <dbReference type="ChEBI" id="CHEBI:49883"/>
        <label>1</label>
    </ligand>
</feature>
<feature type="binding site" evidence="1">
    <location>
        <position position="68"/>
    </location>
    <ligand>
        <name>[4Fe-4S] cluster</name>
        <dbReference type="ChEBI" id="CHEBI:49883"/>
        <label>1</label>
    </ligand>
</feature>
<feature type="binding site" evidence="1">
    <location>
        <position position="72"/>
    </location>
    <ligand>
        <name>[4Fe-4S] cluster</name>
        <dbReference type="ChEBI" id="CHEBI:49883"/>
        <label>2</label>
    </ligand>
</feature>
<feature type="binding site" evidence="1">
    <location>
        <position position="102"/>
    </location>
    <ligand>
        <name>[4Fe-4S] cluster</name>
        <dbReference type="ChEBI" id="CHEBI:49883"/>
        <label>2</label>
    </ligand>
</feature>
<feature type="binding site" evidence="1">
    <location>
        <position position="105"/>
    </location>
    <ligand>
        <name>[4Fe-4S] cluster</name>
        <dbReference type="ChEBI" id="CHEBI:49883"/>
        <label>2</label>
    </ligand>
</feature>
<feature type="binding site" evidence="1">
    <location>
        <position position="108"/>
    </location>
    <ligand>
        <name>[4Fe-4S] cluster</name>
        <dbReference type="ChEBI" id="CHEBI:49883"/>
        <label>2</label>
    </ligand>
</feature>
<feature type="binding site" evidence="1">
    <location>
        <position position="112"/>
    </location>
    <ligand>
        <name>[4Fe-4S] cluster</name>
        <dbReference type="ChEBI" id="CHEBI:49883"/>
        <label>1</label>
    </ligand>
</feature>
<dbReference type="EC" id="7.1.1.-" evidence="1"/>
<dbReference type="EMBL" id="CP001280">
    <property type="protein sequence ID" value="ACK51842.1"/>
    <property type="molecule type" value="Genomic_DNA"/>
</dbReference>
<dbReference type="RefSeq" id="WP_012591911.1">
    <property type="nucleotide sequence ID" value="NC_011666.1"/>
</dbReference>
<dbReference type="SMR" id="B8EIM5"/>
<dbReference type="STRING" id="395965.Msil_2926"/>
<dbReference type="KEGG" id="msl:Msil_2926"/>
<dbReference type="eggNOG" id="COG1143">
    <property type="taxonomic scope" value="Bacteria"/>
</dbReference>
<dbReference type="HOGENOM" id="CLU_067218_5_1_5"/>
<dbReference type="OrthoDB" id="9808559at2"/>
<dbReference type="Proteomes" id="UP000002257">
    <property type="component" value="Chromosome"/>
</dbReference>
<dbReference type="GO" id="GO:0005886">
    <property type="term" value="C:plasma membrane"/>
    <property type="evidence" value="ECO:0007669"/>
    <property type="project" value="UniProtKB-SubCell"/>
</dbReference>
<dbReference type="GO" id="GO:0051539">
    <property type="term" value="F:4 iron, 4 sulfur cluster binding"/>
    <property type="evidence" value="ECO:0007669"/>
    <property type="project" value="UniProtKB-KW"/>
</dbReference>
<dbReference type="GO" id="GO:0005506">
    <property type="term" value="F:iron ion binding"/>
    <property type="evidence" value="ECO:0007669"/>
    <property type="project" value="UniProtKB-UniRule"/>
</dbReference>
<dbReference type="GO" id="GO:0050136">
    <property type="term" value="F:NADH:ubiquinone reductase (non-electrogenic) activity"/>
    <property type="evidence" value="ECO:0007669"/>
    <property type="project" value="UniProtKB-UniRule"/>
</dbReference>
<dbReference type="GO" id="GO:0048038">
    <property type="term" value="F:quinone binding"/>
    <property type="evidence" value="ECO:0007669"/>
    <property type="project" value="UniProtKB-KW"/>
</dbReference>
<dbReference type="GO" id="GO:0009060">
    <property type="term" value="P:aerobic respiration"/>
    <property type="evidence" value="ECO:0007669"/>
    <property type="project" value="TreeGrafter"/>
</dbReference>
<dbReference type="FunFam" id="3.30.70.3270:FF:000001">
    <property type="entry name" value="NADH-quinone oxidoreductase subunit I 1"/>
    <property type="match status" value="1"/>
</dbReference>
<dbReference type="Gene3D" id="3.30.70.3270">
    <property type="match status" value="1"/>
</dbReference>
<dbReference type="HAMAP" id="MF_01351">
    <property type="entry name" value="NDH1_NuoI"/>
    <property type="match status" value="1"/>
</dbReference>
<dbReference type="InterPro" id="IPR017896">
    <property type="entry name" value="4Fe4S_Fe-S-bd"/>
</dbReference>
<dbReference type="InterPro" id="IPR017900">
    <property type="entry name" value="4Fe4S_Fe_S_CS"/>
</dbReference>
<dbReference type="InterPro" id="IPR010226">
    <property type="entry name" value="NADH_quinone_OxRdtase_chainI"/>
</dbReference>
<dbReference type="NCBIfam" id="TIGR01971">
    <property type="entry name" value="NuoI"/>
    <property type="match status" value="1"/>
</dbReference>
<dbReference type="NCBIfam" id="NF004538">
    <property type="entry name" value="PRK05888.1-4"/>
    <property type="match status" value="1"/>
</dbReference>
<dbReference type="NCBIfam" id="NF004539">
    <property type="entry name" value="PRK05888.1-5"/>
    <property type="match status" value="1"/>
</dbReference>
<dbReference type="PANTHER" id="PTHR10849:SF20">
    <property type="entry name" value="NADH DEHYDROGENASE [UBIQUINONE] IRON-SULFUR PROTEIN 8, MITOCHONDRIAL"/>
    <property type="match status" value="1"/>
</dbReference>
<dbReference type="PANTHER" id="PTHR10849">
    <property type="entry name" value="NADH DEHYDROGENASE UBIQUINONE IRON-SULFUR PROTEIN 8, MITOCHONDRIAL"/>
    <property type="match status" value="1"/>
</dbReference>
<dbReference type="Pfam" id="PF12838">
    <property type="entry name" value="Fer4_7"/>
    <property type="match status" value="1"/>
</dbReference>
<dbReference type="SUPFAM" id="SSF54862">
    <property type="entry name" value="4Fe-4S ferredoxins"/>
    <property type="match status" value="1"/>
</dbReference>
<dbReference type="PROSITE" id="PS00198">
    <property type="entry name" value="4FE4S_FER_1"/>
    <property type="match status" value="2"/>
</dbReference>
<dbReference type="PROSITE" id="PS51379">
    <property type="entry name" value="4FE4S_FER_2"/>
    <property type="match status" value="2"/>
</dbReference>
<proteinExistence type="inferred from homology"/>
<accession>B8EIM5</accession>